<comment type="function">
    <text evidence="1">Catalyzes the conversion of N5-carboxyaminoimidazole ribonucleotide (N5-CAIR) to 4-carboxy-5-aminoimidazole ribonucleotide (CAIR).</text>
</comment>
<comment type="catalytic activity">
    <reaction evidence="1">
        <text>5-carboxyamino-1-(5-phospho-D-ribosyl)imidazole + H(+) = 5-amino-1-(5-phospho-D-ribosyl)imidazole-4-carboxylate</text>
        <dbReference type="Rhea" id="RHEA:13193"/>
        <dbReference type="ChEBI" id="CHEBI:15378"/>
        <dbReference type="ChEBI" id="CHEBI:58730"/>
        <dbReference type="ChEBI" id="CHEBI:77657"/>
        <dbReference type="EC" id="5.4.99.18"/>
    </reaction>
</comment>
<comment type="pathway">
    <text evidence="1">Purine metabolism; IMP biosynthesis via de novo pathway; 5-amino-1-(5-phospho-D-ribosyl)imidazole-4-carboxylate from 5-amino-1-(5-phospho-D-ribosyl)imidazole (N5-CAIR route): step 2/2.</text>
</comment>
<comment type="similarity">
    <text evidence="1">Belongs to the AIR carboxylase family. Class I subfamily.</text>
</comment>
<reference key="1">
    <citation type="journal article" date="2005" name="Proc. Natl. Acad. Sci. U.S.A.">
        <title>Complete genome sequence of Vibrio fischeri: a symbiotic bacterium with pathogenic congeners.</title>
        <authorList>
            <person name="Ruby E.G."/>
            <person name="Urbanowski M."/>
            <person name="Campbell J."/>
            <person name="Dunn A."/>
            <person name="Faini M."/>
            <person name="Gunsalus R."/>
            <person name="Lostroh P."/>
            <person name="Lupp C."/>
            <person name="McCann J."/>
            <person name="Millikan D."/>
            <person name="Schaefer A."/>
            <person name="Stabb E."/>
            <person name="Stevens A."/>
            <person name="Visick K."/>
            <person name="Whistler C."/>
            <person name="Greenberg E.P."/>
        </authorList>
    </citation>
    <scope>NUCLEOTIDE SEQUENCE [LARGE SCALE GENOMIC DNA]</scope>
    <source>
        <strain>ATCC 700601 / ES114</strain>
    </source>
</reference>
<proteinExistence type="inferred from homology"/>
<feature type="chain" id="PRO_0000074982" description="N5-carboxyaminoimidazole ribonucleotide mutase">
    <location>
        <begin position="1"/>
        <end position="161"/>
    </location>
</feature>
<feature type="binding site" evidence="1">
    <location>
        <position position="9"/>
    </location>
    <ligand>
        <name>substrate</name>
    </ligand>
</feature>
<feature type="binding site" evidence="1">
    <location>
        <position position="12"/>
    </location>
    <ligand>
        <name>substrate</name>
    </ligand>
</feature>
<feature type="binding site" evidence="1">
    <location>
        <position position="39"/>
    </location>
    <ligand>
        <name>substrate</name>
    </ligand>
</feature>
<name>PURE_ALIF1</name>
<accession>Q5E1R4</accession>
<dbReference type="EC" id="5.4.99.18" evidence="1"/>
<dbReference type="EMBL" id="CP000020">
    <property type="protein sequence ID" value="AAW87032.1"/>
    <property type="molecule type" value="Genomic_DNA"/>
</dbReference>
<dbReference type="RefSeq" id="WP_005421516.1">
    <property type="nucleotide sequence ID" value="NZ_CAWLES010000001.1"/>
</dbReference>
<dbReference type="RefSeq" id="YP_205920.1">
    <property type="nucleotide sequence ID" value="NC_006840.2"/>
</dbReference>
<dbReference type="SMR" id="Q5E1R4"/>
<dbReference type="STRING" id="312309.VF_2537"/>
<dbReference type="EnsemblBacteria" id="AAW87032">
    <property type="protein sequence ID" value="AAW87032"/>
    <property type="gene ID" value="VF_2537"/>
</dbReference>
<dbReference type="GeneID" id="56275639"/>
<dbReference type="KEGG" id="vfi:VF_2537"/>
<dbReference type="PATRIC" id="fig|312309.11.peg.2563"/>
<dbReference type="eggNOG" id="COG0041">
    <property type="taxonomic scope" value="Bacteria"/>
</dbReference>
<dbReference type="HOGENOM" id="CLU_094982_2_2_6"/>
<dbReference type="OrthoDB" id="9791908at2"/>
<dbReference type="UniPathway" id="UPA00074">
    <property type="reaction ID" value="UER00943"/>
</dbReference>
<dbReference type="Proteomes" id="UP000000537">
    <property type="component" value="Chromosome I"/>
</dbReference>
<dbReference type="GO" id="GO:0034023">
    <property type="term" value="F:5-(carboxyamino)imidazole ribonucleotide mutase activity"/>
    <property type="evidence" value="ECO:0007669"/>
    <property type="project" value="UniProtKB-UniRule"/>
</dbReference>
<dbReference type="GO" id="GO:0006189">
    <property type="term" value="P:'de novo' IMP biosynthetic process"/>
    <property type="evidence" value="ECO:0007669"/>
    <property type="project" value="UniProtKB-UniRule"/>
</dbReference>
<dbReference type="Gene3D" id="3.40.50.1970">
    <property type="match status" value="1"/>
</dbReference>
<dbReference type="HAMAP" id="MF_01929">
    <property type="entry name" value="PurE_classI"/>
    <property type="match status" value="1"/>
</dbReference>
<dbReference type="InterPro" id="IPR033747">
    <property type="entry name" value="PurE_ClassI"/>
</dbReference>
<dbReference type="InterPro" id="IPR000031">
    <property type="entry name" value="PurE_dom"/>
</dbReference>
<dbReference type="InterPro" id="IPR024694">
    <property type="entry name" value="PurE_prokaryotes"/>
</dbReference>
<dbReference type="NCBIfam" id="TIGR01162">
    <property type="entry name" value="purE"/>
    <property type="match status" value="1"/>
</dbReference>
<dbReference type="PANTHER" id="PTHR23046:SF2">
    <property type="entry name" value="PHOSPHORIBOSYLAMINOIMIDAZOLE CARBOXYLASE"/>
    <property type="match status" value="1"/>
</dbReference>
<dbReference type="PANTHER" id="PTHR23046">
    <property type="entry name" value="PHOSPHORIBOSYLAMINOIMIDAZOLE CARBOXYLASE CATALYTIC SUBUNIT"/>
    <property type="match status" value="1"/>
</dbReference>
<dbReference type="Pfam" id="PF00731">
    <property type="entry name" value="AIRC"/>
    <property type="match status" value="1"/>
</dbReference>
<dbReference type="PIRSF" id="PIRSF001338">
    <property type="entry name" value="AIR_carboxylase"/>
    <property type="match status" value="1"/>
</dbReference>
<dbReference type="SMART" id="SM01001">
    <property type="entry name" value="AIRC"/>
    <property type="match status" value="1"/>
</dbReference>
<dbReference type="SUPFAM" id="SSF52255">
    <property type="entry name" value="N5-CAIR mutase (phosphoribosylaminoimidazole carboxylase, PurE)"/>
    <property type="match status" value="1"/>
</dbReference>
<evidence type="ECO:0000255" key="1">
    <source>
        <dbReference type="HAMAP-Rule" id="MF_01929"/>
    </source>
</evidence>
<sequence>MKVGIIMGSKSDWPTMKLAAEMLDRFNVPYETKVVSAHRTPQLLADYATQAKDRGIKVIIAGAGGAAHLPGMAAAFTSVPVLGVPVQSRALKGMDSLLSIVQMPKGIAVGTLAIGEAGAANAGILAAQIIGTSNEEVMAAVEAFRKEQTEMVLENPDPSED</sequence>
<gene>
    <name evidence="1" type="primary">purE</name>
    <name type="ordered locus">VF_2537</name>
</gene>
<organism>
    <name type="scientific">Aliivibrio fischeri (strain ATCC 700601 / ES114)</name>
    <name type="common">Vibrio fischeri</name>
    <dbReference type="NCBI Taxonomy" id="312309"/>
    <lineage>
        <taxon>Bacteria</taxon>
        <taxon>Pseudomonadati</taxon>
        <taxon>Pseudomonadota</taxon>
        <taxon>Gammaproteobacteria</taxon>
        <taxon>Vibrionales</taxon>
        <taxon>Vibrionaceae</taxon>
        <taxon>Aliivibrio</taxon>
    </lineage>
</organism>
<keyword id="KW-0413">Isomerase</keyword>
<keyword id="KW-0658">Purine biosynthesis</keyword>
<keyword id="KW-1185">Reference proteome</keyword>
<protein>
    <recommendedName>
        <fullName evidence="1">N5-carboxyaminoimidazole ribonucleotide mutase</fullName>
        <shortName evidence="1">N5-CAIR mutase</shortName>
        <ecNumber evidence="1">5.4.99.18</ecNumber>
    </recommendedName>
    <alternativeName>
        <fullName evidence="1">5-(carboxyamino)imidazole ribonucleotide mutase</fullName>
    </alternativeName>
</protein>